<reference key="1">
    <citation type="journal article" date="1999" name="Nature">
        <title>Sequence and analysis of chromosome 2 of the plant Arabidopsis thaliana.</title>
        <authorList>
            <person name="Lin X."/>
            <person name="Kaul S."/>
            <person name="Rounsley S.D."/>
            <person name="Shea T.P."/>
            <person name="Benito M.-I."/>
            <person name="Town C.D."/>
            <person name="Fujii C.Y."/>
            <person name="Mason T.M."/>
            <person name="Bowman C.L."/>
            <person name="Barnstead M.E."/>
            <person name="Feldblyum T.V."/>
            <person name="Buell C.R."/>
            <person name="Ketchum K.A."/>
            <person name="Lee J.J."/>
            <person name="Ronning C.M."/>
            <person name="Koo H.L."/>
            <person name="Moffat K.S."/>
            <person name="Cronin L.A."/>
            <person name="Shen M."/>
            <person name="Pai G."/>
            <person name="Van Aken S."/>
            <person name="Umayam L."/>
            <person name="Tallon L.J."/>
            <person name="Gill J.E."/>
            <person name="Adams M.D."/>
            <person name="Carrera A.J."/>
            <person name="Creasy T.H."/>
            <person name="Goodman H.M."/>
            <person name="Somerville C.R."/>
            <person name="Copenhaver G.P."/>
            <person name="Preuss D."/>
            <person name="Nierman W.C."/>
            <person name="White O."/>
            <person name="Eisen J.A."/>
            <person name="Salzberg S.L."/>
            <person name="Fraser C.M."/>
            <person name="Venter J.C."/>
        </authorList>
    </citation>
    <scope>NUCLEOTIDE SEQUENCE [LARGE SCALE GENOMIC DNA]</scope>
    <source>
        <strain>cv. Columbia</strain>
    </source>
</reference>
<reference key="2">
    <citation type="journal article" date="2017" name="Plant J.">
        <title>Araport11: a complete reannotation of the Arabidopsis thaliana reference genome.</title>
        <authorList>
            <person name="Cheng C.Y."/>
            <person name="Krishnakumar V."/>
            <person name="Chan A.P."/>
            <person name="Thibaud-Nissen F."/>
            <person name="Schobel S."/>
            <person name="Town C.D."/>
        </authorList>
    </citation>
    <scope>GENOME REANNOTATION</scope>
    <source>
        <strain>cv. Columbia</strain>
    </source>
</reference>
<reference key="3">
    <citation type="submission" date="2002-03" db="EMBL/GenBank/DDBJ databases">
        <title>Full-length cDNA from Arabidopsis thaliana.</title>
        <authorList>
            <person name="Brover V.V."/>
            <person name="Troukhan M.E."/>
            <person name="Alexandrov N.A."/>
            <person name="Lu Y.-P."/>
            <person name="Flavell R.B."/>
            <person name="Feldmann K.A."/>
        </authorList>
    </citation>
    <scope>NUCLEOTIDE SEQUENCE [LARGE SCALE MRNA]</scope>
</reference>
<evidence type="ECO:0000250" key="1"/>
<evidence type="ECO:0000250" key="2">
    <source>
        <dbReference type="UniProtKB" id="O22317"/>
    </source>
</evidence>
<evidence type="ECO:0000255" key="3"/>
<evidence type="ECO:0000305" key="4"/>
<sequence>MAALLLLFLFLFASSALSQDSLIGVNIGTEVTNMPSPTQVVALLKSQNINRVRLYDADRSMLLAFAHTGVQVIISVPNDQLLGISQSNATAANWVTRNVAAYYPATNITTIAVGSEVLTSLTNAASVLVSALKYIQAALVTANLDRQIKVSTPHSSTIILDSFPPSQAFFNKTWDPVIVPLLKFLQSTGSPLLLNVYPYFDYVQSNGVIPLDYALFQPLQANKEAVDANTLLHYTNVFDAIVDAAYFAMSYLNFTNIPIVVTESGWPSKGGPSEHDATVENANTYNSNLIQHVINKTGTPKHPGTAVTTYIYELYNEDTRPGPVSEKNWGLFYTNGTPVYTLRLAGAGAILANDTTNQTFCIAKEKVDRKMLQAALDWACGPGKVDCSALMQGESCYEPDDVVAHSTYAFNAYYQKMGKASGSCDFKGVATVTTTDPSRGTCVFPGSAKSNQTLGNNTSALAPSANSTTSGCIPKYYHHPHASFGDLTLLSLLLIIALVFL</sequence>
<proteinExistence type="evidence at transcript level"/>
<keyword id="KW-0025">Alternative splicing</keyword>
<keyword id="KW-1003">Cell membrane</keyword>
<keyword id="KW-1015">Disulfide bond</keyword>
<keyword id="KW-0325">Glycoprotein</keyword>
<keyword id="KW-0326">Glycosidase</keyword>
<keyword id="KW-0336">GPI-anchor</keyword>
<keyword id="KW-0378">Hydrolase</keyword>
<keyword id="KW-0449">Lipoprotein</keyword>
<keyword id="KW-0472">Membrane</keyword>
<keyword id="KW-0611">Plant defense</keyword>
<keyword id="KW-1185">Reference proteome</keyword>
<keyword id="KW-0732">Signal</keyword>
<name>E133_ARATH</name>
<organism>
    <name type="scientific">Arabidopsis thaliana</name>
    <name type="common">Mouse-ear cress</name>
    <dbReference type="NCBI Taxonomy" id="3702"/>
    <lineage>
        <taxon>Eukaryota</taxon>
        <taxon>Viridiplantae</taxon>
        <taxon>Streptophyta</taxon>
        <taxon>Embryophyta</taxon>
        <taxon>Tracheophyta</taxon>
        <taxon>Spermatophyta</taxon>
        <taxon>Magnoliopsida</taxon>
        <taxon>eudicotyledons</taxon>
        <taxon>Gunneridae</taxon>
        <taxon>Pentapetalae</taxon>
        <taxon>rosids</taxon>
        <taxon>malvids</taxon>
        <taxon>Brassicales</taxon>
        <taxon>Brassicaceae</taxon>
        <taxon>Camelineae</taxon>
        <taxon>Arabidopsis</taxon>
    </lineage>
</organism>
<dbReference type="EC" id="3.2.1.39"/>
<dbReference type="EMBL" id="AC006069">
    <property type="protein sequence ID" value="AAD12708.2"/>
    <property type="molecule type" value="Genomic_DNA"/>
</dbReference>
<dbReference type="EMBL" id="CP002685">
    <property type="protein sequence ID" value="AEC05475.1"/>
    <property type="molecule type" value="Genomic_DNA"/>
</dbReference>
<dbReference type="EMBL" id="AY085500">
    <property type="protein sequence ID" value="AAM62724.1"/>
    <property type="molecule type" value="mRNA"/>
</dbReference>
<dbReference type="PIR" id="B84427">
    <property type="entry name" value="B84427"/>
</dbReference>
<dbReference type="RefSeq" id="NP_565269.1">
    <molecule id="Q9ZU91-1"/>
    <property type="nucleotide sequence ID" value="NM_126224.2"/>
</dbReference>
<dbReference type="SMR" id="Q9ZU91"/>
<dbReference type="FunCoup" id="Q9ZU91">
    <property type="interactions" value="930"/>
</dbReference>
<dbReference type="STRING" id="3702.Q9ZU91"/>
<dbReference type="CAZy" id="CBM43">
    <property type="family name" value="Carbohydrate-Binding Module Family 43"/>
</dbReference>
<dbReference type="CAZy" id="GH17">
    <property type="family name" value="Glycoside Hydrolase Family 17"/>
</dbReference>
<dbReference type="GlyGen" id="Q9ZU91">
    <property type="glycosylation" value="12 sites"/>
</dbReference>
<dbReference type="PaxDb" id="3702-AT2G01630.1"/>
<dbReference type="ProteomicsDB" id="222026">
    <molecule id="Q9ZU91-1"/>
</dbReference>
<dbReference type="EnsemblPlants" id="AT2G01630.1">
    <molecule id="Q9ZU91-1"/>
    <property type="protein sequence ID" value="AT2G01630.1"/>
    <property type="gene ID" value="AT2G01630"/>
</dbReference>
<dbReference type="GeneID" id="814692"/>
<dbReference type="Gramene" id="AT2G01630.1">
    <molecule id="Q9ZU91-1"/>
    <property type="protein sequence ID" value="AT2G01630.1"/>
    <property type="gene ID" value="AT2G01630"/>
</dbReference>
<dbReference type="KEGG" id="ath:AT2G01630"/>
<dbReference type="Araport" id="AT2G01630"/>
<dbReference type="TAIR" id="AT2G01630"/>
<dbReference type="eggNOG" id="ENOG502QUUJ">
    <property type="taxonomic scope" value="Eukaryota"/>
</dbReference>
<dbReference type="InParanoid" id="Q9ZU91"/>
<dbReference type="OrthoDB" id="941679at2759"/>
<dbReference type="PhylomeDB" id="Q9ZU91"/>
<dbReference type="BioCyc" id="ARA:AT2G01630-MONOMER"/>
<dbReference type="PRO" id="PR:Q9ZU91"/>
<dbReference type="Proteomes" id="UP000006548">
    <property type="component" value="Chromosome 2"/>
</dbReference>
<dbReference type="ExpressionAtlas" id="Q9ZU91">
    <property type="expression patterns" value="baseline and differential"/>
</dbReference>
<dbReference type="GO" id="GO:0005739">
    <property type="term" value="C:mitochondrion"/>
    <property type="evidence" value="ECO:0007005"/>
    <property type="project" value="TAIR"/>
</dbReference>
<dbReference type="GO" id="GO:0005886">
    <property type="term" value="C:plasma membrane"/>
    <property type="evidence" value="ECO:0007005"/>
    <property type="project" value="TAIR"/>
</dbReference>
<dbReference type="GO" id="GO:0098552">
    <property type="term" value="C:side of membrane"/>
    <property type="evidence" value="ECO:0007669"/>
    <property type="project" value="UniProtKB-KW"/>
</dbReference>
<dbReference type="GO" id="GO:0042973">
    <property type="term" value="F:glucan endo-1,3-beta-D-glucosidase activity"/>
    <property type="evidence" value="ECO:0007669"/>
    <property type="project" value="UniProtKB-EC"/>
</dbReference>
<dbReference type="GO" id="GO:0005975">
    <property type="term" value="P:carbohydrate metabolic process"/>
    <property type="evidence" value="ECO:0007669"/>
    <property type="project" value="InterPro"/>
</dbReference>
<dbReference type="GO" id="GO:0006952">
    <property type="term" value="P:defense response"/>
    <property type="evidence" value="ECO:0007669"/>
    <property type="project" value="UniProtKB-KW"/>
</dbReference>
<dbReference type="FunFam" id="3.20.20.80:FF:000002">
    <property type="entry name" value="Glucan endo-1,3-beta-glucosidase 3"/>
    <property type="match status" value="1"/>
</dbReference>
<dbReference type="FunFam" id="1.20.58.1040:FF:000001">
    <property type="entry name" value="Glucan endo-1,3-beta-glucosidase 4"/>
    <property type="match status" value="1"/>
</dbReference>
<dbReference type="Gene3D" id="1.20.58.1040">
    <property type="match status" value="1"/>
</dbReference>
<dbReference type="Gene3D" id="3.20.20.80">
    <property type="entry name" value="Glycosidases"/>
    <property type="match status" value="1"/>
</dbReference>
<dbReference type="InterPro" id="IPR000490">
    <property type="entry name" value="Glyco_hydro_17"/>
</dbReference>
<dbReference type="InterPro" id="IPR044965">
    <property type="entry name" value="Glyco_hydro_17_plant"/>
</dbReference>
<dbReference type="InterPro" id="IPR017853">
    <property type="entry name" value="Glycoside_hydrolase_SF"/>
</dbReference>
<dbReference type="InterPro" id="IPR012946">
    <property type="entry name" value="X8"/>
</dbReference>
<dbReference type="PANTHER" id="PTHR32227">
    <property type="entry name" value="GLUCAN ENDO-1,3-BETA-GLUCOSIDASE BG1-RELATED-RELATED"/>
    <property type="match status" value="1"/>
</dbReference>
<dbReference type="Pfam" id="PF00332">
    <property type="entry name" value="Glyco_hydro_17"/>
    <property type="match status" value="1"/>
</dbReference>
<dbReference type="Pfam" id="PF07983">
    <property type="entry name" value="X8"/>
    <property type="match status" value="1"/>
</dbReference>
<dbReference type="SMART" id="SM00768">
    <property type="entry name" value="X8"/>
    <property type="match status" value="1"/>
</dbReference>
<dbReference type="SUPFAM" id="SSF51445">
    <property type="entry name" value="(Trans)glycosidases"/>
    <property type="match status" value="1"/>
</dbReference>
<dbReference type="PROSITE" id="PS00587">
    <property type="entry name" value="GLYCOSYL_HYDROL_F17"/>
    <property type="match status" value="1"/>
</dbReference>
<accession>Q9ZU91</accession>
<feature type="signal peptide" evidence="3">
    <location>
        <begin position="1"/>
        <end position="18"/>
    </location>
</feature>
<feature type="chain" id="PRO_0000011886" description="Glucan endo-1,3-beta-glucosidase 3">
    <location>
        <begin position="19"/>
        <end position="470"/>
    </location>
</feature>
<feature type="propeptide" id="PRO_0000011887" description="Removed in mature form" evidence="3">
    <location>
        <begin position="471"/>
        <end position="501"/>
    </location>
</feature>
<feature type="active site" description="Proton donor" evidence="2">
    <location>
        <position position="116"/>
    </location>
</feature>
<feature type="active site" description="Nucleophile" evidence="2">
    <location>
        <position position="263"/>
    </location>
</feature>
<feature type="lipid moiety-binding region" description="GPI-anchor amidated serine" evidence="3">
    <location>
        <position position="470"/>
    </location>
</feature>
<feature type="glycosylation site" description="N-linked (GlcNAc...) asparagine" evidence="3">
    <location>
        <position position="88"/>
    </location>
</feature>
<feature type="glycosylation site" description="N-linked (GlcNAc...) asparagine" evidence="3">
    <location>
        <position position="107"/>
    </location>
</feature>
<feature type="glycosylation site" description="N-linked (GlcNAc...) asparagine" evidence="3">
    <location>
        <position position="171"/>
    </location>
</feature>
<feature type="glycosylation site" description="N-linked (GlcNAc...) asparagine" evidence="3">
    <location>
        <position position="253"/>
    </location>
</feature>
<feature type="glycosylation site" description="N-linked (GlcNAc...) asparagine" evidence="3">
    <location>
        <position position="295"/>
    </location>
</feature>
<feature type="glycosylation site" description="N-linked (GlcNAc...) asparagine" evidence="3">
    <location>
        <position position="353"/>
    </location>
</feature>
<feature type="glycosylation site" description="N-linked (GlcNAc...) asparagine" evidence="3">
    <location>
        <position position="357"/>
    </location>
</feature>
<feature type="glycosylation site" description="N-linked (GlcNAc...) asparagine" evidence="3">
    <location>
        <position position="451"/>
    </location>
</feature>
<feature type="glycosylation site" description="N-linked (GlcNAc...) asparagine" evidence="3">
    <location>
        <position position="456"/>
    </location>
</feature>
<feature type="glycosylation site" description="N-linked (GlcNAc...) asparagine" evidence="3">
    <location>
        <position position="457"/>
    </location>
</feature>
<feature type="glycosylation site" description="N-linked (GlcNAc...) asparagine" evidence="3">
    <location>
        <position position="466"/>
    </location>
</feature>
<feature type="disulfide bond" evidence="1">
    <location>
        <begin position="361"/>
        <end position="424"/>
    </location>
</feature>
<comment type="catalytic activity">
    <reaction>
        <text>Hydrolysis of (1-&gt;3)-beta-D-glucosidic linkages in (1-&gt;3)-beta-D-glucans.</text>
        <dbReference type="EC" id="3.2.1.39"/>
    </reaction>
</comment>
<comment type="subcellular location">
    <subcellularLocation>
        <location>Cell membrane</location>
        <topology>Lipid-anchor</topology>
        <topology>GPI-anchor</topology>
    </subcellularLocation>
</comment>
<comment type="alternative products">
    <event type="alternative splicing"/>
    <isoform>
        <id>Q9ZU91-1</id>
        <name>1</name>
        <sequence type="displayed"/>
    </isoform>
    <text>A number of isoforms are produced. According to EST sequences.</text>
</comment>
<comment type="PTM">
    <text evidence="1">Contains two additional disulfide bonds.</text>
</comment>
<comment type="similarity">
    <text evidence="4">Belongs to the glycosyl hydrolase 17 family.</text>
</comment>
<gene>
    <name type="ordered locus">At2g01630</name>
    <name type="ORF">T8O11.20</name>
</gene>
<protein>
    <recommendedName>
        <fullName>Glucan endo-1,3-beta-glucosidase 3</fullName>
        <ecNumber>3.2.1.39</ecNumber>
    </recommendedName>
    <alternativeName>
        <fullName>(1-&gt;3)-beta-glucan endohydrolase 3</fullName>
        <shortName>(1-&gt;3)-beta-glucanase 3</shortName>
    </alternativeName>
    <alternativeName>
        <fullName>Beta-1,3-endoglucanase 3</fullName>
        <shortName>Beta-1,3-glucanase 3</shortName>
    </alternativeName>
</protein>